<keyword id="KW-0004">4Fe-4S</keyword>
<keyword id="KW-0408">Iron</keyword>
<keyword id="KW-0411">Iron-sulfur</keyword>
<keyword id="KW-0479">Metal-binding</keyword>
<reference key="1">
    <citation type="journal article" date="2011" name="Proc. Natl. Acad. Sci. U.S.A.">
        <title>Genomic anatomy of Escherichia coli O157:H7 outbreaks.</title>
        <authorList>
            <person name="Eppinger M."/>
            <person name="Mammel M.K."/>
            <person name="Leclerc J.E."/>
            <person name="Ravel J."/>
            <person name="Cebula T.A."/>
        </authorList>
    </citation>
    <scope>NUCLEOTIDE SEQUENCE [LARGE SCALE GENOMIC DNA]</scope>
    <source>
        <strain>EC4115 / EHEC</strain>
    </source>
</reference>
<gene>
    <name evidence="1" type="primary">nfuA</name>
    <name type="ordered locus">ECH74115_4721</name>
</gene>
<proteinExistence type="inferred from homology"/>
<organism>
    <name type="scientific">Escherichia coli O157:H7 (strain EC4115 / EHEC)</name>
    <dbReference type="NCBI Taxonomy" id="444450"/>
    <lineage>
        <taxon>Bacteria</taxon>
        <taxon>Pseudomonadati</taxon>
        <taxon>Pseudomonadota</taxon>
        <taxon>Gammaproteobacteria</taxon>
        <taxon>Enterobacterales</taxon>
        <taxon>Enterobacteriaceae</taxon>
        <taxon>Escherichia</taxon>
    </lineage>
</organism>
<comment type="function">
    <text evidence="1">Involved in iron-sulfur cluster biogenesis. Binds a 4Fe-4S cluster, can transfer this cluster to apoproteins, and thereby intervenes in the maturation of Fe/S proteins. Could also act as a scaffold/chaperone for damaged Fe/S proteins.</text>
</comment>
<comment type="cofactor">
    <cofactor evidence="1">
        <name>[4Fe-4S] cluster</name>
        <dbReference type="ChEBI" id="CHEBI:49883"/>
    </cofactor>
    <text evidence="1">Binds 1 [4Fe-4S] cluster per subunit. The cluster is presumably bound at the interface of two monomers.</text>
</comment>
<comment type="subunit">
    <text evidence="1">Homodimer.</text>
</comment>
<comment type="similarity">
    <text evidence="1">Belongs to the NfuA family.</text>
</comment>
<name>NFUA_ECO5E</name>
<protein>
    <recommendedName>
        <fullName evidence="1">Fe/S biogenesis protein NfuA</fullName>
    </recommendedName>
</protein>
<dbReference type="EMBL" id="CP001164">
    <property type="protein sequence ID" value="ACI35270.1"/>
    <property type="molecule type" value="Genomic_DNA"/>
</dbReference>
<dbReference type="RefSeq" id="WP_000619389.1">
    <property type="nucleotide sequence ID" value="NC_011353.1"/>
</dbReference>
<dbReference type="SMR" id="B5YTW5"/>
<dbReference type="GeneID" id="93778582"/>
<dbReference type="KEGG" id="ecf:ECH74115_4721"/>
<dbReference type="HOGENOM" id="CLU_094569_0_0_6"/>
<dbReference type="GO" id="GO:0051539">
    <property type="term" value="F:4 iron, 4 sulfur cluster binding"/>
    <property type="evidence" value="ECO:0007669"/>
    <property type="project" value="UniProtKB-UniRule"/>
</dbReference>
<dbReference type="GO" id="GO:0005506">
    <property type="term" value="F:iron ion binding"/>
    <property type="evidence" value="ECO:0007669"/>
    <property type="project" value="InterPro"/>
</dbReference>
<dbReference type="GO" id="GO:0016226">
    <property type="term" value="P:iron-sulfur cluster assembly"/>
    <property type="evidence" value="ECO:0007669"/>
    <property type="project" value="UniProtKB-UniRule"/>
</dbReference>
<dbReference type="GO" id="GO:0051604">
    <property type="term" value="P:protein maturation"/>
    <property type="evidence" value="ECO:0007669"/>
    <property type="project" value="UniProtKB-UniRule"/>
</dbReference>
<dbReference type="FunFam" id="2.60.300.12:FF:000004">
    <property type="entry name" value="Fe/S biogenesis protein NfuA"/>
    <property type="match status" value="1"/>
</dbReference>
<dbReference type="FunFam" id="3.30.300.130:FF:000002">
    <property type="entry name" value="Fe/S biogenesis protein NfuA"/>
    <property type="match status" value="1"/>
</dbReference>
<dbReference type="Gene3D" id="3.30.300.130">
    <property type="entry name" value="Fe-S cluster assembly (FSCA)"/>
    <property type="match status" value="1"/>
</dbReference>
<dbReference type="Gene3D" id="2.60.300.12">
    <property type="entry name" value="HesB-like domain"/>
    <property type="match status" value="1"/>
</dbReference>
<dbReference type="HAMAP" id="MF_01637">
    <property type="entry name" value="Fe_S_biogen_NfuA"/>
    <property type="match status" value="1"/>
</dbReference>
<dbReference type="InterPro" id="IPR017726">
    <property type="entry name" value="Fe/S_biogenesis_protein_NfuA"/>
</dbReference>
<dbReference type="InterPro" id="IPR000361">
    <property type="entry name" value="FeS_biogenesis"/>
</dbReference>
<dbReference type="InterPro" id="IPR034904">
    <property type="entry name" value="FSCA_dom_sf"/>
</dbReference>
<dbReference type="InterPro" id="IPR035903">
    <property type="entry name" value="HesB-like_dom_sf"/>
</dbReference>
<dbReference type="InterPro" id="IPR001075">
    <property type="entry name" value="NIF_FeS_clus_asmbl_NifU_C"/>
</dbReference>
<dbReference type="NCBIfam" id="NF008392">
    <property type="entry name" value="PRK11190.1"/>
    <property type="match status" value="1"/>
</dbReference>
<dbReference type="NCBIfam" id="TIGR03341">
    <property type="entry name" value="YhgI_GntY"/>
    <property type="match status" value="1"/>
</dbReference>
<dbReference type="PANTHER" id="PTHR11178:SF51">
    <property type="entry name" value="FE_S BIOGENESIS PROTEIN NFUA"/>
    <property type="match status" value="1"/>
</dbReference>
<dbReference type="PANTHER" id="PTHR11178">
    <property type="entry name" value="IRON-SULFUR CLUSTER SCAFFOLD PROTEIN NFU-RELATED"/>
    <property type="match status" value="1"/>
</dbReference>
<dbReference type="Pfam" id="PF01521">
    <property type="entry name" value="Fe-S_biosyn"/>
    <property type="match status" value="1"/>
</dbReference>
<dbReference type="Pfam" id="PF01106">
    <property type="entry name" value="NifU"/>
    <property type="match status" value="1"/>
</dbReference>
<dbReference type="SUPFAM" id="SSF117916">
    <property type="entry name" value="Fe-S cluster assembly (FSCA) domain-like"/>
    <property type="match status" value="1"/>
</dbReference>
<dbReference type="SUPFAM" id="SSF89360">
    <property type="entry name" value="HesB-like domain"/>
    <property type="match status" value="1"/>
</dbReference>
<evidence type="ECO:0000255" key="1">
    <source>
        <dbReference type="HAMAP-Rule" id="MF_01637"/>
    </source>
</evidence>
<accession>B5YTW5</accession>
<sequence>MIRISDAAQAHFAKLLANQEEGTQIRVFVINPGTPNAECGVSYCPPDAVEATDTALKFDLLTAYVDELSAPYLEDAEIDFVTDQLGSQLTLKAPNAKMRKVADDAPLMERVEYMLQSQINPQLAGHGGRVSLMEITEDGYAILQFGGGCNGCSMVDVTLKEGIEKQLLNEFPELKGVRDLTEHQRGEHSYY</sequence>
<feature type="chain" id="PRO_1000186745" description="Fe/S biogenesis protein NfuA">
    <location>
        <begin position="1"/>
        <end position="191"/>
    </location>
</feature>
<feature type="binding site" evidence="1">
    <location>
        <position position="149"/>
    </location>
    <ligand>
        <name>[4Fe-4S] cluster</name>
        <dbReference type="ChEBI" id="CHEBI:49883"/>
    </ligand>
</feature>
<feature type="binding site" evidence="1">
    <location>
        <position position="152"/>
    </location>
    <ligand>
        <name>[4Fe-4S] cluster</name>
        <dbReference type="ChEBI" id="CHEBI:49883"/>
    </ligand>
</feature>